<evidence type="ECO:0000269" key="1">
    <source>
    </source>
</evidence>
<evidence type="ECO:0000305" key="2"/>
<organism>
    <name type="scientific">Vigna unguiculata subsp. sesquipedalis</name>
    <name type="common">Yard-Long bean</name>
    <name type="synonym">Vigna sesquipedalis</name>
    <dbReference type="NCBI Taxonomy" id="138955"/>
    <lineage>
        <taxon>Eukaryota</taxon>
        <taxon>Viridiplantae</taxon>
        <taxon>Streptophyta</taxon>
        <taxon>Embryophyta</taxon>
        <taxon>Tracheophyta</taxon>
        <taxon>Spermatophyta</taxon>
        <taxon>Magnoliopsida</taxon>
        <taxon>eudicotyledons</taxon>
        <taxon>Gunneridae</taxon>
        <taxon>Pentapetalae</taxon>
        <taxon>rosids</taxon>
        <taxon>fabids</taxon>
        <taxon>Fabales</taxon>
        <taxon>Fabaceae</taxon>
        <taxon>Papilionoideae</taxon>
        <taxon>50 kb inversion clade</taxon>
        <taxon>NPAAA clade</taxon>
        <taxon>indigoferoid/millettioid clade</taxon>
        <taxon>Phaseoleae</taxon>
        <taxon>Vigna</taxon>
    </lineage>
</organism>
<reference evidence="2" key="1">
    <citation type="journal article" date="2003" name="Biochem. Biophys. Res. Commun.">
        <title>Purification of a trypsin-stable lectin with antiproliferative and HIV-1 reverse transcriptase inhibitory activity.</title>
        <authorList>
            <person name="Wong J.H."/>
            <person name="Ng T.B."/>
        </authorList>
    </citation>
    <scope>PROTEIN SEQUENCE</scope>
    <scope>FUNCTION</scope>
    <scope>SUBUNIT</scope>
    <scope>INDUCTION</scope>
    <source>
        <strain evidence="1">cv. Ground bean</strain>
        <tissue evidence="1">Seed</tissue>
    </source>
</reference>
<accession>P83955</accession>
<feature type="chain" id="PRO_0000105114" description="Lectin 29 kDa subunit">
    <location>
        <begin position="1"/>
        <end position="15" status="greater than"/>
    </location>
</feature>
<feature type="non-terminal residue">
    <location>
        <position position="15"/>
    </location>
</feature>
<protein>
    <recommendedName>
        <fullName>Lectin 29 kDa subunit</fullName>
    </recommendedName>
    <alternativeName>
        <fullName>Hemagglutinin 29 kDa subunit</fullName>
    </alternativeName>
</protein>
<name>LG29_VIGUS</name>
<proteinExistence type="evidence at protein level"/>
<keyword id="KW-0903">Direct protein sequencing</keyword>
<keyword id="KW-0348">Hemagglutinin</keyword>
<keyword id="KW-0430">Lectin</keyword>
<comment type="function">
    <text evidence="1">Trypsin-stable lectin with hemagglutinating activity. Has mitogenic activity on murine splenocytes. Inhibits HIV-reverse transcriptase.</text>
</comment>
<comment type="subunit">
    <text evidence="1">Heterodimer of a 29 kDa and a 31 kDa subunit.</text>
</comment>
<comment type="induction">
    <text evidence="1">Hemagglutinating activity is inhibited by polygalacturonic acid.</text>
</comment>
<comment type="similarity">
    <text evidence="2">Belongs to the leguminous lectin family.</text>
</comment>
<sequence>AFQTSFVFQRFYETN</sequence>
<dbReference type="GO" id="GO:0030246">
    <property type="term" value="F:carbohydrate binding"/>
    <property type="evidence" value="ECO:0007669"/>
    <property type="project" value="UniProtKB-KW"/>
</dbReference>